<dbReference type="EMBL" id="AM933173">
    <property type="protein sequence ID" value="CAR39774.1"/>
    <property type="molecule type" value="Genomic_DNA"/>
</dbReference>
<dbReference type="RefSeq" id="WP_000447529.1">
    <property type="nucleotide sequence ID" value="NC_011274.1"/>
</dbReference>
<dbReference type="SMR" id="B5RH20"/>
<dbReference type="GeneID" id="93778672"/>
<dbReference type="KEGG" id="seg:SG4004"/>
<dbReference type="HOGENOM" id="CLU_083987_3_3_6"/>
<dbReference type="Proteomes" id="UP000008321">
    <property type="component" value="Chromosome"/>
</dbReference>
<dbReference type="GO" id="GO:0022625">
    <property type="term" value="C:cytosolic large ribosomal subunit"/>
    <property type="evidence" value="ECO:0007669"/>
    <property type="project" value="TreeGrafter"/>
</dbReference>
<dbReference type="GO" id="GO:0019843">
    <property type="term" value="F:rRNA binding"/>
    <property type="evidence" value="ECO:0007669"/>
    <property type="project" value="UniProtKB-UniRule"/>
</dbReference>
<dbReference type="GO" id="GO:0003735">
    <property type="term" value="F:structural constituent of ribosome"/>
    <property type="evidence" value="ECO:0007669"/>
    <property type="project" value="InterPro"/>
</dbReference>
<dbReference type="GO" id="GO:0006412">
    <property type="term" value="P:translation"/>
    <property type="evidence" value="ECO:0007669"/>
    <property type="project" value="UniProtKB-UniRule"/>
</dbReference>
<dbReference type="CDD" id="cd00336">
    <property type="entry name" value="Ribosomal_L22"/>
    <property type="match status" value="1"/>
</dbReference>
<dbReference type="FunFam" id="3.90.470.10:FF:000001">
    <property type="entry name" value="50S ribosomal protein L22"/>
    <property type="match status" value="1"/>
</dbReference>
<dbReference type="Gene3D" id="3.90.470.10">
    <property type="entry name" value="Ribosomal protein L22/L17"/>
    <property type="match status" value="1"/>
</dbReference>
<dbReference type="HAMAP" id="MF_01331_B">
    <property type="entry name" value="Ribosomal_uL22_B"/>
    <property type="match status" value="1"/>
</dbReference>
<dbReference type="InterPro" id="IPR001063">
    <property type="entry name" value="Ribosomal_uL22"/>
</dbReference>
<dbReference type="InterPro" id="IPR005727">
    <property type="entry name" value="Ribosomal_uL22_bac/chlpt-type"/>
</dbReference>
<dbReference type="InterPro" id="IPR047867">
    <property type="entry name" value="Ribosomal_uL22_bac/org-type"/>
</dbReference>
<dbReference type="InterPro" id="IPR018260">
    <property type="entry name" value="Ribosomal_uL22_CS"/>
</dbReference>
<dbReference type="InterPro" id="IPR036394">
    <property type="entry name" value="Ribosomal_uL22_sf"/>
</dbReference>
<dbReference type="NCBIfam" id="TIGR01044">
    <property type="entry name" value="rplV_bact"/>
    <property type="match status" value="1"/>
</dbReference>
<dbReference type="PANTHER" id="PTHR13501">
    <property type="entry name" value="CHLOROPLAST 50S RIBOSOMAL PROTEIN L22-RELATED"/>
    <property type="match status" value="1"/>
</dbReference>
<dbReference type="PANTHER" id="PTHR13501:SF8">
    <property type="entry name" value="LARGE RIBOSOMAL SUBUNIT PROTEIN UL22M"/>
    <property type="match status" value="1"/>
</dbReference>
<dbReference type="Pfam" id="PF00237">
    <property type="entry name" value="Ribosomal_L22"/>
    <property type="match status" value="1"/>
</dbReference>
<dbReference type="SUPFAM" id="SSF54843">
    <property type="entry name" value="Ribosomal protein L22"/>
    <property type="match status" value="1"/>
</dbReference>
<dbReference type="PROSITE" id="PS00464">
    <property type="entry name" value="RIBOSOMAL_L22"/>
    <property type="match status" value="1"/>
</dbReference>
<sequence length="110" mass="12226">METIAKHRHARSSAQKVRLVADLIRGKKVSQALDILTYTNKKAAVLVKKVLESAIANAEHNDGADIDDLKVTKIFVDEGPSMKRIMPRAKGRADRILKRTSHITVVVSDR</sequence>
<gene>
    <name evidence="1" type="primary">rplV</name>
    <name type="ordered locus">SG4004</name>
</gene>
<evidence type="ECO:0000255" key="1">
    <source>
        <dbReference type="HAMAP-Rule" id="MF_01331"/>
    </source>
</evidence>
<evidence type="ECO:0000305" key="2"/>
<keyword id="KW-0687">Ribonucleoprotein</keyword>
<keyword id="KW-0689">Ribosomal protein</keyword>
<keyword id="KW-0694">RNA-binding</keyword>
<keyword id="KW-0699">rRNA-binding</keyword>
<protein>
    <recommendedName>
        <fullName evidence="1">Large ribosomal subunit protein uL22</fullName>
    </recommendedName>
    <alternativeName>
        <fullName evidence="2">50S ribosomal protein L22</fullName>
    </alternativeName>
</protein>
<accession>B5RH20</accession>
<reference key="1">
    <citation type="journal article" date="2008" name="Genome Res.">
        <title>Comparative genome analysis of Salmonella enteritidis PT4 and Salmonella gallinarum 287/91 provides insights into evolutionary and host adaptation pathways.</title>
        <authorList>
            <person name="Thomson N.R."/>
            <person name="Clayton D.J."/>
            <person name="Windhorst D."/>
            <person name="Vernikos G."/>
            <person name="Davidson S."/>
            <person name="Churcher C."/>
            <person name="Quail M.A."/>
            <person name="Stevens M."/>
            <person name="Jones M.A."/>
            <person name="Watson M."/>
            <person name="Barron A."/>
            <person name="Layton A."/>
            <person name="Pickard D."/>
            <person name="Kingsley R.A."/>
            <person name="Bignell A."/>
            <person name="Clark L."/>
            <person name="Harris B."/>
            <person name="Ormond D."/>
            <person name="Abdellah Z."/>
            <person name="Brooks K."/>
            <person name="Cherevach I."/>
            <person name="Chillingworth T."/>
            <person name="Woodward J."/>
            <person name="Norberczak H."/>
            <person name="Lord A."/>
            <person name="Arrowsmith C."/>
            <person name="Jagels K."/>
            <person name="Moule S."/>
            <person name="Mungall K."/>
            <person name="Saunders M."/>
            <person name="Whitehead S."/>
            <person name="Chabalgoity J.A."/>
            <person name="Maskell D."/>
            <person name="Humphreys T."/>
            <person name="Roberts M."/>
            <person name="Barrow P.A."/>
            <person name="Dougan G."/>
            <person name="Parkhill J."/>
        </authorList>
    </citation>
    <scope>NUCLEOTIDE SEQUENCE [LARGE SCALE GENOMIC DNA]</scope>
    <source>
        <strain>287/91 / NCTC 13346</strain>
    </source>
</reference>
<feature type="chain" id="PRO_1000142304" description="Large ribosomal subunit protein uL22">
    <location>
        <begin position="1"/>
        <end position="110"/>
    </location>
</feature>
<comment type="function">
    <text evidence="1">This protein binds specifically to 23S rRNA; its binding is stimulated by other ribosomal proteins, e.g. L4, L17, and L20. It is important during the early stages of 50S assembly. It makes multiple contacts with different domains of the 23S rRNA in the assembled 50S subunit and ribosome (By similarity).</text>
</comment>
<comment type="function">
    <text evidence="1">The globular domain of the protein is located near the polypeptide exit tunnel on the outside of the subunit, while an extended beta-hairpin is found that lines the wall of the exit tunnel in the center of the 70S ribosome.</text>
</comment>
<comment type="subunit">
    <text evidence="1">Part of the 50S ribosomal subunit.</text>
</comment>
<comment type="similarity">
    <text evidence="1">Belongs to the universal ribosomal protein uL22 family.</text>
</comment>
<name>RL22_SALG2</name>
<proteinExistence type="inferred from homology"/>
<organism>
    <name type="scientific">Salmonella gallinarum (strain 287/91 / NCTC 13346)</name>
    <dbReference type="NCBI Taxonomy" id="550538"/>
    <lineage>
        <taxon>Bacteria</taxon>
        <taxon>Pseudomonadati</taxon>
        <taxon>Pseudomonadota</taxon>
        <taxon>Gammaproteobacteria</taxon>
        <taxon>Enterobacterales</taxon>
        <taxon>Enterobacteriaceae</taxon>
        <taxon>Salmonella</taxon>
    </lineage>
</organism>